<organism>
    <name type="scientific">Macaca fascicularis</name>
    <name type="common">Crab-eating macaque</name>
    <name type="synonym">Cynomolgus monkey</name>
    <dbReference type="NCBI Taxonomy" id="9541"/>
    <lineage>
        <taxon>Eukaryota</taxon>
        <taxon>Metazoa</taxon>
        <taxon>Chordata</taxon>
        <taxon>Craniata</taxon>
        <taxon>Vertebrata</taxon>
        <taxon>Euteleostomi</taxon>
        <taxon>Mammalia</taxon>
        <taxon>Eutheria</taxon>
        <taxon>Euarchontoglires</taxon>
        <taxon>Primates</taxon>
        <taxon>Haplorrhini</taxon>
        <taxon>Catarrhini</taxon>
        <taxon>Cercopithecidae</taxon>
        <taxon>Cercopithecinae</taxon>
        <taxon>Macaca</taxon>
    </lineage>
</organism>
<protein>
    <recommendedName>
        <fullName evidence="1">Ubiquitin-fold modifier 1</fullName>
    </recommendedName>
</protein>
<evidence type="ECO:0000250" key="1">
    <source>
        <dbReference type="UniProtKB" id="P61960"/>
    </source>
</evidence>
<evidence type="ECO:0000303" key="2">
    <source ref="1"/>
</evidence>
<evidence type="ECO:0000305" key="3"/>
<proteinExistence type="inferred from homology"/>
<dbReference type="EMBL" id="AB169912">
    <property type="protein sequence ID" value="BAE01993.1"/>
    <property type="molecule type" value="mRNA"/>
</dbReference>
<dbReference type="RefSeq" id="XP_005585753.1">
    <property type="nucleotide sequence ID" value="XM_005585696.4"/>
</dbReference>
<dbReference type="SMR" id="Q4R4I2"/>
<dbReference type="STRING" id="9541.ENSMFAP00000035083"/>
<dbReference type="GeneID" id="102146980"/>
<dbReference type="KEGG" id="mcf:102146980"/>
<dbReference type="CTD" id="51569"/>
<dbReference type="VEuPathDB" id="HostDB:ENSMFAG00000004000"/>
<dbReference type="eggNOG" id="KOG3483">
    <property type="taxonomic scope" value="Eukaryota"/>
</dbReference>
<dbReference type="OMA" id="MEHAVGK"/>
<dbReference type="OrthoDB" id="3265at314294"/>
<dbReference type="Proteomes" id="UP000233100">
    <property type="component" value="Chromosome 17"/>
</dbReference>
<dbReference type="GO" id="GO:0005737">
    <property type="term" value="C:cytoplasm"/>
    <property type="evidence" value="ECO:0000250"/>
    <property type="project" value="UniProtKB"/>
</dbReference>
<dbReference type="GO" id="GO:0005634">
    <property type="term" value="C:nucleus"/>
    <property type="evidence" value="ECO:0000250"/>
    <property type="project" value="UniProtKB"/>
</dbReference>
<dbReference type="GO" id="GO:0007420">
    <property type="term" value="P:brain development"/>
    <property type="evidence" value="ECO:0000250"/>
    <property type="project" value="UniProtKB"/>
</dbReference>
<dbReference type="GO" id="GO:1990592">
    <property type="term" value="P:protein K69-linked ufmylation"/>
    <property type="evidence" value="ECO:0000250"/>
    <property type="project" value="UniProtKB"/>
</dbReference>
<dbReference type="GO" id="GO:0071569">
    <property type="term" value="P:protein ufmylation"/>
    <property type="evidence" value="ECO:0000250"/>
    <property type="project" value="UniProtKB"/>
</dbReference>
<dbReference type="GO" id="GO:0033146">
    <property type="term" value="P:regulation of intracellular estrogen receptor signaling pathway"/>
    <property type="evidence" value="ECO:0000250"/>
    <property type="project" value="UniProtKB"/>
</dbReference>
<dbReference type="GO" id="GO:0034976">
    <property type="term" value="P:response to endoplasmic reticulum stress"/>
    <property type="evidence" value="ECO:0000250"/>
    <property type="project" value="UniProtKB"/>
</dbReference>
<dbReference type="GO" id="GO:0061709">
    <property type="term" value="P:reticulophagy"/>
    <property type="evidence" value="ECO:0000250"/>
    <property type="project" value="UniProtKB"/>
</dbReference>
<dbReference type="CDD" id="cd01766">
    <property type="entry name" value="Ubl_UFM1"/>
    <property type="match status" value="1"/>
</dbReference>
<dbReference type="FunFam" id="3.10.20.90:FF:000044">
    <property type="entry name" value="Ubiquitin-fold modifier 1"/>
    <property type="match status" value="1"/>
</dbReference>
<dbReference type="Gene3D" id="3.10.20.90">
    <property type="entry name" value="Phosphatidylinositol 3-kinase Catalytic Subunit, Chain A, domain 1"/>
    <property type="match status" value="1"/>
</dbReference>
<dbReference type="InterPro" id="IPR029071">
    <property type="entry name" value="Ubiquitin-like_domsf"/>
</dbReference>
<dbReference type="InterPro" id="IPR005375">
    <property type="entry name" value="UFM1"/>
</dbReference>
<dbReference type="PANTHER" id="PTHR15825">
    <property type="entry name" value="UBIQUITIN-FOLD MODIFIER 1"/>
    <property type="match status" value="1"/>
</dbReference>
<dbReference type="PANTHER" id="PTHR15825:SF5">
    <property type="entry name" value="UBIQUITIN-FOLD MODIFIER 1"/>
    <property type="match status" value="1"/>
</dbReference>
<dbReference type="Pfam" id="PF03671">
    <property type="entry name" value="Ufm1"/>
    <property type="match status" value="1"/>
</dbReference>
<dbReference type="PIRSF" id="PIRSF038027">
    <property type="entry name" value="Ubiquitin-like_Ufm1"/>
    <property type="match status" value="1"/>
</dbReference>
<dbReference type="SUPFAM" id="SSF54236">
    <property type="entry name" value="Ubiquitin-like"/>
    <property type="match status" value="1"/>
</dbReference>
<keyword id="KW-0963">Cytoplasm</keyword>
<keyword id="KW-1017">Isopeptide bond</keyword>
<keyword id="KW-0539">Nucleus</keyword>
<keyword id="KW-1185">Reference proteome</keyword>
<keyword id="KW-0832">Ubl conjugation</keyword>
<keyword id="KW-0833">Ubl conjugation pathway</keyword>
<name>UFM1_MACFA</name>
<comment type="function">
    <text evidence="1">Ubiquitin-like modifier which can be covalently attached via an isopeptide bond to lysine residues of substrate proteins as a monomer or a lysine-linked polymer. The so-called ufmylation, requires the UFM1-activating E1 enzyme UBA5, the UFM1-conjugating E2 enzyme UFC1, and the UFM1-ligase E3 enzyme UFL1. Ufmylation is involved in various processes, such as ribosome recycling, response to DNA damage, transcription or reticulophagy (also called ER-phagy) induced in response to endoplasmic reticulum stress.</text>
</comment>
<comment type="subunit">
    <text evidence="1">Interacts with UBA5. Interacts with UFC1.</text>
</comment>
<comment type="subcellular location">
    <subcellularLocation>
        <location evidence="1">Nucleus</location>
    </subcellularLocation>
    <subcellularLocation>
        <location evidence="1">Cytoplasm</location>
    </subcellularLocation>
</comment>
<comment type="PTM">
    <text evidence="1">UFM1 precursor is cleaved by UFSP1, promoting its maturation: processing of the C-terminal Ser-Cys dipeptide is required to expose its C-terminal conserved Gly residue.</text>
</comment>
<comment type="similarity">
    <text evidence="3">Belongs to the UFM1 family.</text>
</comment>
<feature type="chain" id="PRO_0000042124" description="Ubiquitin-fold modifier 1">
    <location>
        <begin position="1"/>
        <end position="83"/>
    </location>
</feature>
<feature type="propeptide" id="PRO_0000042125" description="Removed in mature form" evidence="1">
    <location>
        <begin position="84"/>
        <end position="85"/>
    </location>
</feature>
<feature type="cross-link" description="Glycyl lysine isopeptide (Lys-Gly) (interchain with G-Cter in UFM1)" evidence="1">
    <location>
        <position position="69"/>
    </location>
</feature>
<feature type="cross-link" description="Glycyl lysine isopeptide (Gly-Lys) (interchain with K-? in acceptor proteins)" evidence="1">
    <location>
        <position position="83"/>
    </location>
</feature>
<reference key="1">
    <citation type="submission" date="2005-06" db="EMBL/GenBank/DDBJ databases">
        <title>DNA sequences of macaque genes expressed in brain or testis and its evolutionary implications.</title>
        <authorList>
            <consortium name="International consortium for macaque cDNA sequencing and analysis"/>
        </authorList>
    </citation>
    <scope>NUCLEOTIDE SEQUENCE [LARGE SCALE MRNA]</scope>
    <source>
        <tissue>Temporal cortex</tissue>
    </source>
</reference>
<accession>Q4R4I2</accession>
<sequence>MSKVSFKITLTSDPRLPYKVLSVPESTPFTAVLKFAAEEFKVPAATSAIITNDGIGINPAQTAGNVFLKHGSELRIIPRDRVGSC</sequence>
<gene>
    <name evidence="1" type="primary">UFM1</name>
    <name evidence="2" type="ORF">QtrA-13634</name>
</gene>